<comment type="function">
    <text evidence="4 8 9 10 11">Embryonic developmental transcription factor (PubMed:10072776, PubMed:2598266, PubMed:30982648). The lateral or ventral identity of a cell depends upon the concentration of this protein in its nucleus during the blastoderm stage (PubMed:2598266). Acts as a morphogenetic transcription factor that specifically binds to the kappa-B-related consensus sequence 5'-GRGAAAANCC-3', located in the enhancer region of zygotic genes such as Zen, Twist, Snail and Decapentaplegic, promoting their expression (PubMed:10072776, PubMed:2598266, PubMed:30982648). Part of a signaling pathway involving NF-kappa-B and Toll-related receptors, that functions in the apoptosis of unfit cells during cell competition (PubMed:25477468). Mediates an immune response in larvae (PubMed:10072776). May be part of a NF-kappa-B and Tollo signaling cascade that regulates development of the peripheral nervous system (PubMed:18000549).</text>
</comment>
<comment type="subunit">
    <text evidence="5 6 7">Interacts with tamo via the nuclear localization signal (PubMed:12653959). Interacts with emb, a component of the nuclear export complex (PubMed:14638854, PubMed:17032737).</text>
</comment>
<comment type="interaction">
    <interactant intactId="EBI-198375">
        <id>P15330</id>
    </interactant>
    <interactant intactId="EBI-200600">
        <id>Q03017</id>
        <label>cact</label>
    </interactant>
    <organismsDiffer>false</organismsDiffer>
    <experiments>6</experiments>
</comment>
<comment type="interaction">
    <interactant intactId="EBI-198375">
        <id>P15330</id>
    </interactant>
    <interactant intactId="EBI-188843">
        <id>P98149</id>
        <label>Dif</label>
    </interactant>
    <organismsDiffer>false</organismsDiffer>
    <experiments>2</experiments>
</comment>
<comment type="interaction">
    <interactant intactId="EBI-198375">
        <id>P15330</id>
    </interactant>
    <interactant intactId="EBI-198375">
        <id>P15330</id>
        <label>dl</label>
    </interactant>
    <organismsDiffer>false</organismsDiffer>
    <experiments>2</experiments>
</comment>
<comment type="interaction">
    <interactant intactId="EBI-198375">
        <id>P15330</id>
    </interactant>
    <interactant intactId="EBI-15786027">
        <id>Q94527-1</id>
        <label>Rel</label>
    </interactant>
    <organismsDiffer>false</organismsDiffer>
    <experiments>2</experiments>
</comment>
<comment type="interaction">
    <interactant intactId="EBI-198375">
        <id>P15330</id>
    </interactant>
    <interactant intactId="EBI-91385">
        <id>Q9W1A4</id>
        <label>tamo</label>
    </interactant>
    <organismsDiffer>false</organismsDiffer>
    <experiments>4</experiments>
</comment>
<comment type="interaction">
    <interactant intactId="EBI-198375">
        <id>P15330</id>
    </interactant>
    <interactant intactId="EBI-93181">
        <id>P22812</id>
        <label>tub</label>
    </interactant>
    <organismsDiffer>false</organismsDiffer>
    <experiments>3</experiments>
</comment>
<comment type="subcellular location">
    <subcellularLocation>
        <location evidence="6 7 10">Cytoplasm</location>
    </subcellularLocation>
    <subcellularLocation>
        <location evidence="6 7 10">Nucleus</location>
    </subcellularLocation>
    <text evidence="5 6 7 10">In ventral regions it is first cytoplasmic, then the protein is relocalized in the nucleus (PubMed:2598266). Its nuclear localization is essential to its function as a morphogen (PubMed:2598266). In dorsal regions it remains cytoplasmic (PubMed:2598266). Tamo negatively regulates nuclear import of dl (PubMed:12653959). Emb is responsible for export of dl from the nucleus (PubMed:14638854). Nuclear localization is enhanced upon microbial infection (PubMed:17032737).</text>
</comment>
<comment type="subcellular location">
    <molecule>Isoform A</molecule>
    <subcellularLocation>
        <location evidence="15">Nucleus</location>
    </subcellularLocation>
</comment>
<comment type="alternative products">
    <event type="alternative splicing"/>
    <isoform>
        <id>P15330-1</id>
        <name>C</name>
        <sequence type="displayed"/>
    </isoform>
    <isoform>
        <id>P15330-2</id>
        <name>A</name>
        <name>B</name>
        <sequence type="described" ref="VSP_005581 VSP_005582"/>
    </isoform>
</comment>
<comment type="tissue specificity">
    <text evidence="4 7">In unchallenged larvae, expression of both isoforms is seen in fat body and gut (isoform A is more abundant). After immune challenge levels of both isoforms are enhanced.</text>
</comment>
<comment type="developmental stage">
    <text evidence="4">Isoform A is expressed maternally and both isoforms are expressed zygotically from 6-9 hours embryos through to adulthood.</text>
</comment>
<comment type="miscellaneous">
    <molecule>Isoform A</molecule>
    <text evidence="15">Nuclear localization signal at positions 335-340.</text>
</comment>
<protein>
    <recommendedName>
        <fullName>Embryonic polarity protein dorsal</fullName>
    </recommendedName>
</protein>
<name>DORS_DROME</name>
<reference key="1">
    <citation type="journal article" date="1987" name="Science">
        <title>Dorsal, an embryonic polarity gene in Drosophila, is homologous to the vertebrate proto-oncogene, c-rel.</title>
        <authorList>
            <person name="Steward R."/>
        </authorList>
    </citation>
    <scope>NUCLEOTIDE SEQUENCE [MRNA] (ISOFORM A)</scope>
</reference>
<reference key="2">
    <citation type="journal article" date="1989" name="Cell">
        <title>Relocalization of the dorsal protein from the cytoplasm to the nucleus correlates with its function.</title>
        <authorList>
            <person name="Steward R."/>
        </authorList>
    </citation>
    <scope>SEQUENCE REVISION</scope>
    <scope>FUNCTION</scope>
    <scope>SUBCELLULAR LOCATION</scope>
</reference>
<reference key="3">
    <citation type="journal article" date="1999" name="Gene">
        <title>Dorsal-B, a splice variant of the Drosophila factor Dorsal, is a novel Rel/NF-kappaB transcriptional activator.</title>
        <authorList>
            <person name="Gross I."/>
            <person name="Georgel P."/>
            <person name="Oertel-Buchheit P."/>
            <person name="Schnarr M."/>
            <person name="Reichhart J.-M."/>
        </authorList>
    </citation>
    <scope>NUCLEOTIDE SEQUENCE [MRNA] (ISOFORM A)</scope>
    <scope>FUNCTION</scope>
    <scope>TISSUE SPECIFICITY</scope>
    <scope>DEVELOPMENTAL STAGE</scope>
    <scope>ALTERNATIVE SPLICING</scope>
    <source>
        <strain>Oregon-R</strain>
    </source>
</reference>
<reference key="4">
    <citation type="journal article" date="2000" name="Science">
        <title>The genome sequence of Drosophila melanogaster.</title>
        <authorList>
            <person name="Adams M.D."/>
            <person name="Celniker S.E."/>
            <person name="Holt R.A."/>
            <person name="Evans C.A."/>
            <person name="Gocayne J.D."/>
            <person name="Amanatides P.G."/>
            <person name="Scherer S.E."/>
            <person name="Li P.W."/>
            <person name="Hoskins R.A."/>
            <person name="Galle R.F."/>
            <person name="George R.A."/>
            <person name="Lewis S.E."/>
            <person name="Richards S."/>
            <person name="Ashburner M."/>
            <person name="Henderson S.N."/>
            <person name="Sutton G.G."/>
            <person name="Wortman J.R."/>
            <person name="Yandell M.D."/>
            <person name="Zhang Q."/>
            <person name="Chen L.X."/>
            <person name="Brandon R.C."/>
            <person name="Rogers Y.-H.C."/>
            <person name="Blazej R.G."/>
            <person name="Champe M."/>
            <person name="Pfeiffer B.D."/>
            <person name="Wan K.H."/>
            <person name="Doyle C."/>
            <person name="Baxter E.G."/>
            <person name="Helt G."/>
            <person name="Nelson C.R."/>
            <person name="Miklos G.L.G."/>
            <person name="Abril J.F."/>
            <person name="Agbayani A."/>
            <person name="An H.-J."/>
            <person name="Andrews-Pfannkoch C."/>
            <person name="Baldwin D."/>
            <person name="Ballew R.M."/>
            <person name="Basu A."/>
            <person name="Baxendale J."/>
            <person name="Bayraktaroglu L."/>
            <person name="Beasley E.M."/>
            <person name="Beeson K.Y."/>
            <person name="Benos P.V."/>
            <person name="Berman B.P."/>
            <person name="Bhandari D."/>
            <person name="Bolshakov S."/>
            <person name="Borkova D."/>
            <person name="Botchan M.R."/>
            <person name="Bouck J."/>
            <person name="Brokstein P."/>
            <person name="Brottier P."/>
            <person name="Burtis K.C."/>
            <person name="Busam D.A."/>
            <person name="Butler H."/>
            <person name="Cadieu E."/>
            <person name="Center A."/>
            <person name="Chandra I."/>
            <person name="Cherry J.M."/>
            <person name="Cawley S."/>
            <person name="Dahlke C."/>
            <person name="Davenport L.B."/>
            <person name="Davies P."/>
            <person name="de Pablos B."/>
            <person name="Delcher A."/>
            <person name="Deng Z."/>
            <person name="Mays A.D."/>
            <person name="Dew I."/>
            <person name="Dietz S.M."/>
            <person name="Dodson K."/>
            <person name="Doup L.E."/>
            <person name="Downes M."/>
            <person name="Dugan-Rocha S."/>
            <person name="Dunkov B.C."/>
            <person name="Dunn P."/>
            <person name="Durbin K.J."/>
            <person name="Evangelista C.C."/>
            <person name="Ferraz C."/>
            <person name="Ferriera S."/>
            <person name="Fleischmann W."/>
            <person name="Fosler C."/>
            <person name="Gabrielian A.E."/>
            <person name="Garg N.S."/>
            <person name="Gelbart W.M."/>
            <person name="Glasser K."/>
            <person name="Glodek A."/>
            <person name="Gong F."/>
            <person name="Gorrell J.H."/>
            <person name="Gu Z."/>
            <person name="Guan P."/>
            <person name="Harris M."/>
            <person name="Harris N.L."/>
            <person name="Harvey D.A."/>
            <person name="Heiman T.J."/>
            <person name="Hernandez J.R."/>
            <person name="Houck J."/>
            <person name="Hostin D."/>
            <person name="Houston K.A."/>
            <person name="Howland T.J."/>
            <person name="Wei M.-H."/>
            <person name="Ibegwam C."/>
            <person name="Jalali M."/>
            <person name="Kalush F."/>
            <person name="Karpen G.H."/>
            <person name="Ke Z."/>
            <person name="Kennison J.A."/>
            <person name="Ketchum K.A."/>
            <person name="Kimmel B.E."/>
            <person name="Kodira C.D."/>
            <person name="Kraft C.L."/>
            <person name="Kravitz S."/>
            <person name="Kulp D."/>
            <person name="Lai Z."/>
            <person name="Lasko P."/>
            <person name="Lei Y."/>
            <person name="Levitsky A.A."/>
            <person name="Li J.H."/>
            <person name="Li Z."/>
            <person name="Liang Y."/>
            <person name="Lin X."/>
            <person name="Liu X."/>
            <person name="Mattei B."/>
            <person name="McIntosh T.C."/>
            <person name="McLeod M.P."/>
            <person name="McPherson D."/>
            <person name="Merkulov G."/>
            <person name="Milshina N.V."/>
            <person name="Mobarry C."/>
            <person name="Morris J."/>
            <person name="Moshrefi A."/>
            <person name="Mount S.M."/>
            <person name="Moy M."/>
            <person name="Murphy B."/>
            <person name="Murphy L."/>
            <person name="Muzny D.M."/>
            <person name="Nelson D.L."/>
            <person name="Nelson D.R."/>
            <person name="Nelson K.A."/>
            <person name="Nixon K."/>
            <person name="Nusskern D.R."/>
            <person name="Pacleb J.M."/>
            <person name="Palazzolo M."/>
            <person name="Pittman G.S."/>
            <person name="Pan S."/>
            <person name="Pollard J."/>
            <person name="Puri V."/>
            <person name="Reese M.G."/>
            <person name="Reinert K."/>
            <person name="Remington K."/>
            <person name="Saunders R.D.C."/>
            <person name="Scheeler F."/>
            <person name="Shen H."/>
            <person name="Shue B.C."/>
            <person name="Siden-Kiamos I."/>
            <person name="Simpson M."/>
            <person name="Skupski M.P."/>
            <person name="Smith T.J."/>
            <person name="Spier E."/>
            <person name="Spradling A.C."/>
            <person name="Stapleton M."/>
            <person name="Strong R."/>
            <person name="Sun E."/>
            <person name="Svirskas R."/>
            <person name="Tector C."/>
            <person name="Turner R."/>
            <person name="Venter E."/>
            <person name="Wang A.H."/>
            <person name="Wang X."/>
            <person name="Wang Z.-Y."/>
            <person name="Wassarman D.A."/>
            <person name="Weinstock G.M."/>
            <person name="Weissenbach J."/>
            <person name="Williams S.M."/>
            <person name="Woodage T."/>
            <person name="Worley K.C."/>
            <person name="Wu D."/>
            <person name="Yang S."/>
            <person name="Yao Q.A."/>
            <person name="Ye J."/>
            <person name="Yeh R.-F."/>
            <person name="Zaveri J.S."/>
            <person name="Zhan M."/>
            <person name="Zhang G."/>
            <person name="Zhao Q."/>
            <person name="Zheng L."/>
            <person name="Zheng X.H."/>
            <person name="Zhong F.N."/>
            <person name="Zhong W."/>
            <person name="Zhou X."/>
            <person name="Zhu S.C."/>
            <person name="Zhu X."/>
            <person name="Smith H.O."/>
            <person name="Gibbs R.A."/>
            <person name="Myers E.W."/>
            <person name="Rubin G.M."/>
            <person name="Venter J.C."/>
        </authorList>
    </citation>
    <scope>NUCLEOTIDE SEQUENCE [LARGE SCALE GENOMIC DNA]</scope>
    <source>
        <strain>Berkeley</strain>
    </source>
</reference>
<reference key="5">
    <citation type="journal article" date="2002" name="Genome Biol.">
        <title>Annotation of the Drosophila melanogaster euchromatic genome: a systematic review.</title>
        <authorList>
            <person name="Misra S."/>
            <person name="Crosby M.A."/>
            <person name="Mungall C.J."/>
            <person name="Matthews B.B."/>
            <person name="Campbell K.S."/>
            <person name="Hradecky P."/>
            <person name="Huang Y."/>
            <person name="Kaminker J.S."/>
            <person name="Millburn G.H."/>
            <person name="Prochnik S.E."/>
            <person name="Smith C.D."/>
            <person name="Tupy J.L."/>
            <person name="Whitfield E.J."/>
            <person name="Bayraktaroglu L."/>
            <person name="Berman B.P."/>
            <person name="Bettencourt B.R."/>
            <person name="Celniker S.E."/>
            <person name="de Grey A.D.N.J."/>
            <person name="Drysdale R.A."/>
            <person name="Harris N.L."/>
            <person name="Richter J."/>
            <person name="Russo S."/>
            <person name="Schroeder A.J."/>
            <person name="Shu S.Q."/>
            <person name="Stapleton M."/>
            <person name="Yamada C."/>
            <person name="Ashburner M."/>
            <person name="Gelbart W.M."/>
            <person name="Rubin G.M."/>
            <person name="Lewis S.E."/>
        </authorList>
    </citation>
    <scope>GENOME REANNOTATION</scope>
    <scope>ALTERNATIVE SPLICING</scope>
    <source>
        <strain>Berkeley</strain>
    </source>
</reference>
<reference key="6">
    <citation type="submission" date="2004-08" db="EMBL/GenBank/DDBJ databases">
        <authorList>
            <person name="Stapleton M."/>
            <person name="Carlson J.W."/>
            <person name="Chavez C."/>
            <person name="Frise E."/>
            <person name="George R.A."/>
            <person name="Pacleb J.M."/>
            <person name="Park S."/>
            <person name="Wan K.H."/>
            <person name="Yu C."/>
            <person name="Rubin G.M."/>
            <person name="Celniker S.E."/>
        </authorList>
    </citation>
    <scope>NUCLEOTIDE SEQUENCE [LARGE SCALE MRNA] (ISOFORM A)</scope>
    <source>
        <strain>Berkeley</strain>
        <tissue>Embryo</tissue>
    </source>
</reference>
<reference key="7">
    <citation type="journal article" date="2003" name="Genes Cells">
        <title>Tamo selectively modulates nuclear import in Drosophila.</title>
        <authorList>
            <person name="Minakhina S."/>
            <person name="Yang J."/>
            <person name="Steward R."/>
        </authorList>
    </citation>
    <scope>INTERACTION WITH TAMO</scope>
    <scope>SUBCELLULAR LOCATION</scope>
</reference>
<reference key="8">
    <citation type="journal article" date="2003" name="J. Cell Biol.">
        <title>The Drosophila nucleoporin DNup88 localizes DNup214 and CRM1 on the nuclear envelope and attenuates NES-mediated nuclear export.</title>
        <authorList>
            <person name="Roth P."/>
            <person name="Xylourgidis N."/>
            <person name="Sabri N."/>
            <person name="Uv A.E."/>
            <person name="Fornerod M."/>
            <person name="Samakovlis C."/>
        </authorList>
    </citation>
    <scope>INTERACTION WITH EMB</scope>
    <scope>SUBCELLULAR LOCATION</scope>
</reference>
<reference key="9">
    <citation type="journal article" date="2006" name="J. Cell Sci.">
        <title>The nucleoporin Nup214 sequesters CRM1 at the nuclear rim and modulates NFkappaB activation in Drosophila.</title>
        <authorList>
            <person name="Xylourgidis N."/>
            <person name="Roth P."/>
            <person name="Sabri N."/>
            <person name="Tsarouhas V."/>
            <person name="Samakovlis C."/>
        </authorList>
    </citation>
    <scope>INTERACTION WITH EMB</scope>
    <scope>SUBCELLULAR LOCATION</scope>
    <scope>TISSUE SPECIFICITY</scope>
</reference>
<reference key="10">
    <citation type="journal article" date="2007" name="PLoS ONE">
        <title>NF-kappaB/Rel-mediated regulation of the neural fate in Drosophila.</title>
        <authorList>
            <person name="Ayyar S."/>
            <person name="Pistillo D."/>
            <person name="Calleja M."/>
            <person name="Brookfield A."/>
            <person name="Gittins K."/>
            <person name="Goldstone C."/>
            <person name="Simpson P."/>
        </authorList>
    </citation>
    <scope>FUNCTION</scope>
</reference>
<reference key="11">
    <citation type="journal article" date="2014" name="Science">
        <title>An ancient defense system eliminates unfit cells from developing tissues during cell competition.</title>
        <authorList>
            <person name="Meyer S.N."/>
            <person name="Amoyel M."/>
            <person name="Bergantinos C."/>
            <person name="de la Cova C."/>
            <person name="Schertel C."/>
            <person name="Basler K."/>
            <person name="Johnston L.A."/>
        </authorList>
    </citation>
    <scope>FUNCTION</scope>
</reference>
<reference key="12">
    <citation type="journal article" date="2019" name="Curr. Biol.">
        <title>The Drosophila pioneer factor Zelda modulates the nuclear microenvironment of a Dorsal target enhancer to potentiate transcriptional output.</title>
        <authorList>
            <person name="Yamada S."/>
            <person name="Whitney P.H."/>
            <person name="Huang S.K."/>
            <person name="Eck E.C."/>
            <person name="Garcia H.G."/>
            <person name="Rushlow C.A."/>
        </authorList>
    </citation>
    <scope>FUNCTION</scope>
</reference>
<evidence type="ECO:0000255" key="1"/>
<evidence type="ECO:0000255" key="2">
    <source>
        <dbReference type="PROSITE-ProRule" id="PRU00265"/>
    </source>
</evidence>
<evidence type="ECO:0000256" key="3">
    <source>
        <dbReference type="SAM" id="MobiDB-lite"/>
    </source>
</evidence>
<evidence type="ECO:0000269" key="4">
    <source>
    </source>
</evidence>
<evidence type="ECO:0000269" key="5">
    <source>
    </source>
</evidence>
<evidence type="ECO:0000269" key="6">
    <source>
    </source>
</evidence>
<evidence type="ECO:0000269" key="7">
    <source>
    </source>
</evidence>
<evidence type="ECO:0000269" key="8">
    <source>
    </source>
</evidence>
<evidence type="ECO:0000269" key="9">
    <source>
    </source>
</evidence>
<evidence type="ECO:0000269" key="10">
    <source>
    </source>
</evidence>
<evidence type="ECO:0000269" key="11">
    <source>
    </source>
</evidence>
<evidence type="ECO:0000303" key="12">
    <source>
    </source>
</evidence>
<evidence type="ECO:0000303" key="13">
    <source>
    </source>
</evidence>
<evidence type="ECO:0000303" key="14">
    <source ref="6"/>
</evidence>
<evidence type="ECO:0000305" key="15"/>
<sequence length="999" mass="111551">MFPNQNNGAAPGQGPAVDGQQSLNYNGLPAQQQQQLAQSTKNVRKKPYVKITEQPAGKALRFRYECEGRSAGSIPGVNSTPENKTYPTIEIVGYKGRAVVVVSCVTKDTPYRPHPHNLVGKEGCKKGVCTLEINSETMRAVFSNLGIQCVKKKDIEAALKAREEIRVDPFKTGFSHRFQPSSIDLNSVRLCFQVFMESEQKGRFTSPLPPVVSEPIFDKKAMSDLVICRLCSCSATVFGNTQIILLCEKVAKEDISVRFFEEKNGQSVWEAFGDFQHTDVHKQTAITFKTPRYHTLDITEPAKVFIQLRRPSDGVTSEALPFEYVPMDSGKHTFWNLHRHLKRKPDEDLFQQILRLDAKREVQPPTIEVIDLDTPKIDVQREIPSEMEFNHEESQQSEPALEQEQSVQQEQYTQEQSLQQEQYTQEQSLQQEQYLQQLEQQQSFQLEEPMQQDQELPAQQSFDQAIDHLPDHTSDHIPEDMEAADAHAEAEAHRLRSEQEKEIDTIIDEKVRELEQLDLGQQLEPRPLTANDKITEWMKSSEIEQQVHEPSPTAEADVLDSALEISKADKTLDELLETVAELDEIYTDFKVQRDTYKNTIQNELAGLQGRAPLQVEDSFDDAATYTSLQIAFKNPVLIPMDDIMPPTPPMSQCAPEDAHQHYDPVEVNSQARKPETPMRPVPPVPPAILTIQYPPEEDKLPPLPPKRIRKQDSNAENRSIEANTVQTKPSTGESPLNKRLPPAPKNPNFNTLPRQKKPGFFSKLFSRRKSKPDLAQGQENSSILDSKANSREPSIGHFNMQDPMRASLRSSKSAAPFISNPAPAKSSPVKAKKPGSKLTKPVGRSVSSVSGKRPAYLNADVVHIPLKGDSVNSLPQQQRTEGYSQSSTISVGAGLDRRTASALQLADIPISEGGMELVAIADRQSLHNLVSSIEGHFNVQLDPNLDLTEAEHFALYTSIPPLAAASEFDETSAYYAPVDAGEILTPDEVAKRLAAANGI</sequence>
<keyword id="KW-0010">Activator</keyword>
<keyword id="KW-0025">Alternative splicing</keyword>
<keyword id="KW-0963">Cytoplasm</keyword>
<keyword id="KW-0217">Developmental protein</keyword>
<keyword id="KW-0238">DNA-binding</keyword>
<keyword id="KW-0539">Nucleus</keyword>
<keyword id="KW-0597">Phosphoprotein</keyword>
<keyword id="KW-1185">Reference proteome</keyword>
<keyword id="KW-0804">Transcription</keyword>
<keyword id="KW-0805">Transcription regulation</keyword>
<gene>
    <name type="primary">dl</name>
    <name type="ORF">CG6667</name>
</gene>
<accession>P15330</accession>
<accession>O77088</accession>
<accession>Q0E8P9</accession>
<accession>Q6AWP3</accession>
<accession>Q9VJD9</accession>
<accession>Q9VJE0</accession>
<dbReference type="EMBL" id="M23702">
    <property type="protein sequence ID" value="AAA28479.1"/>
    <property type="molecule type" value="mRNA"/>
</dbReference>
<dbReference type="EMBL" id="AF053614">
    <property type="protein sequence ID" value="AAC35296.1"/>
    <property type="molecule type" value="mRNA"/>
</dbReference>
<dbReference type="EMBL" id="AE014134">
    <property type="protein sequence ID" value="AAF53611.1"/>
    <property type="molecule type" value="Genomic_DNA"/>
</dbReference>
<dbReference type="EMBL" id="AE014134">
    <property type="protein sequence ID" value="AAF53612.1"/>
    <property type="molecule type" value="Genomic_DNA"/>
</dbReference>
<dbReference type="EMBL" id="BT015205">
    <property type="protein sequence ID" value="AAT94434.1"/>
    <property type="molecule type" value="mRNA"/>
</dbReference>
<dbReference type="PIR" id="A30350">
    <property type="entry name" value="A30350"/>
</dbReference>
<dbReference type="RefSeq" id="NP_001163000.1">
    <molecule id="P15330-2"/>
    <property type="nucleotide sequence ID" value="NM_001169529.1"/>
</dbReference>
<dbReference type="RefSeq" id="NP_001163001.1">
    <molecule id="P15330-2"/>
    <property type="nucleotide sequence ID" value="NM_001169530.1"/>
</dbReference>
<dbReference type="RefSeq" id="NP_001286014.1">
    <molecule id="P15330-1"/>
    <property type="nucleotide sequence ID" value="NM_001299085.1"/>
</dbReference>
<dbReference type="RefSeq" id="NP_724052.1">
    <molecule id="P15330-2"/>
    <property type="nucleotide sequence ID" value="NM_165217.3"/>
</dbReference>
<dbReference type="RefSeq" id="NP_724053.1">
    <molecule id="P15330-2"/>
    <property type="nucleotide sequence ID" value="NM_165218.3"/>
</dbReference>
<dbReference type="RefSeq" id="NP_724054.1">
    <molecule id="P15330-1"/>
    <property type="nucleotide sequence ID" value="NM_165219.2"/>
</dbReference>
<dbReference type="SMR" id="P15330"/>
<dbReference type="BioGRID" id="61043">
    <property type="interactions" value="74"/>
</dbReference>
<dbReference type="DIP" id="DIP-17423N"/>
<dbReference type="FunCoup" id="P15330">
    <property type="interactions" value="162"/>
</dbReference>
<dbReference type="IntAct" id="P15330">
    <property type="interactions" value="9"/>
</dbReference>
<dbReference type="STRING" id="7227.FBpp0080560"/>
<dbReference type="iPTMnet" id="P15330"/>
<dbReference type="PaxDb" id="7227-FBpp0080560"/>
<dbReference type="EnsemblMetazoa" id="FBtr0081005">
    <molecule id="P15330-2"/>
    <property type="protein sequence ID" value="FBpp0080558"/>
    <property type="gene ID" value="FBgn0260632"/>
</dbReference>
<dbReference type="EnsemblMetazoa" id="FBtr0081006">
    <molecule id="P15330-2"/>
    <property type="protein sequence ID" value="FBpp0080559"/>
    <property type="gene ID" value="FBgn0260632"/>
</dbReference>
<dbReference type="EnsemblMetazoa" id="FBtr0081007">
    <molecule id="P15330-1"/>
    <property type="protein sequence ID" value="FBpp0080560"/>
    <property type="gene ID" value="FBgn0260632"/>
</dbReference>
<dbReference type="EnsemblMetazoa" id="FBtr0301383">
    <molecule id="P15330-2"/>
    <property type="protein sequence ID" value="FBpp0290597"/>
    <property type="gene ID" value="FBgn0260632"/>
</dbReference>
<dbReference type="EnsemblMetazoa" id="FBtr0301384">
    <molecule id="P15330-2"/>
    <property type="protein sequence ID" value="FBpp0290598"/>
    <property type="gene ID" value="FBgn0260632"/>
</dbReference>
<dbReference type="EnsemblMetazoa" id="FBtr0340250">
    <molecule id="P15330-1"/>
    <property type="protein sequence ID" value="FBpp0309222"/>
    <property type="gene ID" value="FBgn0260632"/>
</dbReference>
<dbReference type="GeneID" id="35047"/>
<dbReference type="KEGG" id="dme:Dmel_CG6667"/>
<dbReference type="UCSC" id="CG6667-RA">
    <molecule id="P15330-1"/>
    <property type="organism name" value="d. melanogaster"/>
</dbReference>
<dbReference type="AGR" id="FB:FBgn0260632"/>
<dbReference type="CTD" id="35047"/>
<dbReference type="FlyBase" id="FBgn0260632">
    <property type="gene designation" value="dl"/>
</dbReference>
<dbReference type="VEuPathDB" id="VectorBase:FBgn0260632"/>
<dbReference type="eggNOG" id="ENOG502QQS6">
    <property type="taxonomic scope" value="Eukaryota"/>
</dbReference>
<dbReference type="GeneTree" id="ENSGT00940000171058"/>
<dbReference type="HOGENOM" id="CLU_016080_0_0_1"/>
<dbReference type="InParanoid" id="P15330"/>
<dbReference type="OMA" id="MEDIMPP"/>
<dbReference type="OrthoDB" id="7881762at2759"/>
<dbReference type="PhylomeDB" id="P15330"/>
<dbReference type="Reactome" id="R-DME-1169091">
    <property type="pathway name" value="Activation of NF-kappaB in B cells"/>
</dbReference>
<dbReference type="Reactome" id="R-DME-1810476">
    <property type="pathway name" value="RIP-mediated NFkB activation via ZBP1"/>
</dbReference>
<dbReference type="Reactome" id="R-DME-202424">
    <property type="pathway name" value="Downstream TCR signaling"/>
</dbReference>
<dbReference type="Reactome" id="R-DME-209400">
    <property type="pathway name" value="Transcriptional activtion by phosphorylated DL/DIF dimer"/>
</dbReference>
<dbReference type="Reactome" id="R-DME-209406">
    <property type="pathway name" value="Degradation of NF-kappa-B inhibitor, CACT"/>
</dbReference>
<dbReference type="Reactome" id="R-DME-209560">
    <property type="pathway name" value="NF-kB is activated and signals survival"/>
</dbReference>
<dbReference type="Reactome" id="R-DME-214842">
    <property type="pathway name" value="DL and DIF homodimers bind to TUB and phosphorylated PLL in the TL receptor 'signalling complex'"/>
</dbReference>
<dbReference type="Reactome" id="R-DME-214844">
    <property type="pathway name" value="DL and DIF homodimers complexed with CACT are all phosphorylated in the TL receptor 'signalling complex'"/>
</dbReference>
<dbReference type="Reactome" id="R-DME-214869">
    <property type="pathway name" value="Phosphorylated CACT, DL and DIF homodimers dissociate from the TL receptor 'signalling complex'"/>
</dbReference>
<dbReference type="Reactome" id="R-DME-2871837">
    <property type="pathway name" value="FCERI mediated NF-kB activation"/>
</dbReference>
<dbReference type="Reactome" id="R-DME-3134963">
    <property type="pathway name" value="DEx/H-box helicases activate type I IFN and inflammatory cytokines production"/>
</dbReference>
<dbReference type="Reactome" id="R-DME-445989">
    <property type="pathway name" value="TAK1-dependent IKK and NF-kappa-B activation"/>
</dbReference>
<dbReference type="Reactome" id="R-DME-4755510">
    <property type="pathway name" value="SUMOylation of immune response proteins"/>
</dbReference>
<dbReference type="Reactome" id="R-DME-5607761">
    <property type="pathway name" value="Dectin-1 mediated noncanonical NF-kB signaling"/>
</dbReference>
<dbReference type="Reactome" id="R-DME-5607764">
    <property type="pathway name" value="CLEC7A (Dectin-1) signaling"/>
</dbReference>
<dbReference type="Reactome" id="R-DME-5621575">
    <property type="pathway name" value="CD209 (DC-SIGN) signaling"/>
</dbReference>
<dbReference type="Reactome" id="R-DME-5676590">
    <property type="pathway name" value="NIK--&gt;noncanonical NF-kB signaling"/>
</dbReference>
<dbReference type="Reactome" id="R-DME-9020702">
    <property type="pathway name" value="Interleukin-1 signaling"/>
</dbReference>
<dbReference type="Reactome" id="R-DME-933542">
    <property type="pathway name" value="TRAF6 mediated NF-kB activation"/>
</dbReference>
<dbReference type="Reactome" id="R-DME-9860927">
    <property type="pathway name" value="Turbulent (oscillatory, disturbed) flow shear stress activates signaling by PIEZO1 and integrins in endothelial cells"/>
</dbReference>
<dbReference type="SignaLink" id="P15330"/>
<dbReference type="ChiTaRS" id="Dl">
    <property type="organism name" value="fly"/>
</dbReference>
<dbReference type="GenomeRNAi" id="35047"/>
<dbReference type="PRO" id="PR:P15330"/>
<dbReference type="Proteomes" id="UP000000803">
    <property type="component" value="Chromosome 2L"/>
</dbReference>
<dbReference type="Bgee" id="FBgn0260632">
    <property type="expression patterns" value="Expressed in copper cell (Drosophila) in digestive tract and 190 other cell types or tissues"/>
</dbReference>
<dbReference type="ExpressionAtlas" id="P15330">
    <property type="expression patterns" value="baseline and differential"/>
</dbReference>
<dbReference type="GO" id="GO:0005737">
    <property type="term" value="C:cytoplasm"/>
    <property type="evidence" value="ECO:0000314"/>
    <property type="project" value="UniProtKB"/>
</dbReference>
<dbReference type="GO" id="GO:0005829">
    <property type="term" value="C:cytosol"/>
    <property type="evidence" value="ECO:0000314"/>
    <property type="project" value="FlyBase"/>
</dbReference>
<dbReference type="GO" id="GO:0031594">
    <property type="term" value="C:neuromuscular junction"/>
    <property type="evidence" value="ECO:0000314"/>
    <property type="project" value="FlyBase"/>
</dbReference>
<dbReference type="GO" id="GO:0005654">
    <property type="term" value="C:nucleoplasm"/>
    <property type="evidence" value="ECO:0000304"/>
    <property type="project" value="Reactome"/>
</dbReference>
<dbReference type="GO" id="GO:0005634">
    <property type="term" value="C:nucleus"/>
    <property type="evidence" value="ECO:0000314"/>
    <property type="project" value="UniProtKB"/>
</dbReference>
<dbReference type="GO" id="GO:0071212">
    <property type="term" value="C:subsynaptic reticulum"/>
    <property type="evidence" value="ECO:0000314"/>
    <property type="project" value="FlyBase"/>
</dbReference>
<dbReference type="GO" id="GO:0001228">
    <property type="term" value="F:DNA-binding transcription activator activity, RNA polymerase II-specific"/>
    <property type="evidence" value="ECO:0000314"/>
    <property type="project" value="FlyBase"/>
</dbReference>
<dbReference type="GO" id="GO:0000981">
    <property type="term" value="F:DNA-binding transcription factor activity, RNA polymerase II-specific"/>
    <property type="evidence" value="ECO:0000314"/>
    <property type="project" value="UniProtKB"/>
</dbReference>
<dbReference type="GO" id="GO:0140297">
    <property type="term" value="F:DNA-binding transcription factor binding"/>
    <property type="evidence" value="ECO:0000353"/>
    <property type="project" value="FlyBase"/>
</dbReference>
<dbReference type="GO" id="GO:0070379">
    <property type="term" value="F:high mobility group box 1 binding"/>
    <property type="evidence" value="ECO:0000353"/>
    <property type="project" value="FlyBase"/>
</dbReference>
<dbReference type="GO" id="GO:0042802">
    <property type="term" value="F:identical protein binding"/>
    <property type="evidence" value="ECO:0000353"/>
    <property type="project" value="IntAct"/>
</dbReference>
<dbReference type="GO" id="GO:0000978">
    <property type="term" value="F:RNA polymerase II cis-regulatory region sequence-specific DNA binding"/>
    <property type="evidence" value="ECO:0000314"/>
    <property type="project" value="UniProtKB"/>
</dbReference>
<dbReference type="GO" id="GO:0000977">
    <property type="term" value="F:RNA polymerase II transcription regulatory region sequence-specific DNA binding"/>
    <property type="evidence" value="ECO:0000314"/>
    <property type="project" value="FlyBase"/>
</dbReference>
<dbReference type="GO" id="GO:0043565">
    <property type="term" value="F:sequence-specific DNA binding"/>
    <property type="evidence" value="ECO:0000314"/>
    <property type="project" value="FlyBase"/>
</dbReference>
<dbReference type="GO" id="GO:0007249">
    <property type="term" value="P:canonical NF-kappaB signal transduction"/>
    <property type="evidence" value="ECO:0000314"/>
    <property type="project" value="FlyBase"/>
</dbReference>
<dbReference type="GO" id="GO:0009950">
    <property type="term" value="P:dorsal/ventral axis specification"/>
    <property type="evidence" value="ECO:0000316"/>
    <property type="project" value="FlyBase"/>
</dbReference>
<dbReference type="GO" id="GO:0009953">
    <property type="term" value="P:dorsal/ventral pattern formation"/>
    <property type="evidence" value="ECO:0000314"/>
    <property type="project" value="UniProtKB"/>
</dbReference>
<dbReference type="GO" id="GO:0006955">
    <property type="term" value="P:immune response"/>
    <property type="evidence" value="ECO:0000315"/>
    <property type="project" value="UniProtKB"/>
</dbReference>
<dbReference type="GO" id="GO:0045087">
    <property type="term" value="P:innate immune response"/>
    <property type="evidence" value="ECO:0000318"/>
    <property type="project" value="GO_Central"/>
</dbReference>
<dbReference type="GO" id="GO:0035006">
    <property type="term" value="P:melanization defense response"/>
    <property type="evidence" value="ECO:0000315"/>
    <property type="project" value="FlyBase"/>
</dbReference>
<dbReference type="GO" id="GO:0038061">
    <property type="term" value="P:non-canonical NF-kappaB signal transduction"/>
    <property type="evidence" value="ECO:0000318"/>
    <property type="project" value="GO_Central"/>
</dbReference>
<dbReference type="GO" id="GO:0048935">
    <property type="term" value="P:peripheral nervous system neuron development"/>
    <property type="evidence" value="ECO:0000315"/>
    <property type="project" value="FlyBase"/>
</dbReference>
<dbReference type="GO" id="GO:0002225">
    <property type="term" value="P:positive regulation of antimicrobial peptide production"/>
    <property type="evidence" value="ECO:0000315"/>
    <property type="project" value="FlyBase"/>
</dbReference>
<dbReference type="GO" id="GO:0045612">
    <property type="term" value="P:positive regulation of hemocyte differentiation"/>
    <property type="evidence" value="ECO:0000315"/>
    <property type="project" value="FlyBase"/>
</dbReference>
<dbReference type="GO" id="GO:0035208">
    <property type="term" value="P:positive regulation of hemocyte proliferation"/>
    <property type="evidence" value="ECO:0000315"/>
    <property type="project" value="FlyBase"/>
</dbReference>
<dbReference type="GO" id="GO:0045944">
    <property type="term" value="P:positive regulation of transcription by RNA polymerase II"/>
    <property type="evidence" value="ECO:0000314"/>
    <property type="project" value="FlyBase"/>
</dbReference>
<dbReference type="GO" id="GO:0035206">
    <property type="term" value="P:regulation of hemocyte proliferation"/>
    <property type="evidence" value="ECO:0000314"/>
    <property type="project" value="FlyBase"/>
</dbReference>
<dbReference type="GO" id="GO:0034097">
    <property type="term" value="P:response to cytokine"/>
    <property type="evidence" value="ECO:0000318"/>
    <property type="project" value="GO_Central"/>
</dbReference>
<dbReference type="GO" id="GO:0008063">
    <property type="term" value="P:Toll signaling pathway"/>
    <property type="evidence" value="ECO:0000314"/>
    <property type="project" value="FlyBase"/>
</dbReference>
<dbReference type="CDD" id="cd01177">
    <property type="entry name" value="IPT_NFkappaB"/>
    <property type="match status" value="1"/>
</dbReference>
<dbReference type="CDD" id="cd07887">
    <property type="entry name" value="RHD-n_Dorsal_Dif"/>
    <property type="match status" value="1"/>
</dbReference>
<dbReference type="FunFam" id="2.60.40.340:FF:000006">
    <property type="entry name" value="Dorsal isoform 1-B"/>
    <property type="match status" value="1"/>
</dbReference>
<dbReference type="FunFam" id="2.60.40.10:FF:000046">
    <property type="entry name" value="Nuclear factor NF-kappa-B p105 subunit"/>
    <property type="match status" value="1"/>
</dbReference>
<dbReference type="Gene3D" id="2.60.40.10">
    <property type="entry name" value="Immunoglobulins"/>
    <property type="match status" value="1"/>
</dbReference>
<dbReference type="Gene3D" id="2.60.40.340">
    <property type="entry name" value="Rel homology domain (RHD), DNA-binding domain"/>
    <property type="match status" value="1"/>
</dbReference>
<dbReference type="InterPro" id="IPR013783">
    <property type="entry name" value="Ig-like_fold"/>
</dbReference>
<dbReference type="InterPro" id="IPR014756">
    <property type="entry name" value="Ig_E-set"/>
</dbReference>
<dbReference type="InterPro" id="IPR002909">
    <property type="entry name" value="IPT_dom"/>
</dbReference>
<dbReference type="InterPro" id="IPR033926">
    <property type="entry name" value="IPT_NFkappaB"/>
</dbReference>
<dbReference type="InterPro" id="IPR000451">
    <property type="entry name" value="NFkB/Dor"/>
</dbReference>
<dbReference type="InterPro" id="IPR008967">
    <property type="entry name" value="p53-like_TF_DNA-bd_sf"/>
</dbReference>
<dbReference type="InterPro" id="IPR030492">
    <property type="entry name" value="RHD_CS"/>
</dbReference>
<dbReference type="InterPro" id="IPR032397">
    <property type="entry name" value="RHD_dimer"/>
</dbReference>
<dbReference type="InterPro" id="IPR011539">
    <property type="entry name" value="RHD_DNA_bind_dom"/>
</dbReference>
<dbReference type="InterPro" id="IPR037059">
    <property type="entry name" value="RHD_DNA_bind_dom_sf"/>
</dbReference>
<dbReference type="PANTHER" id="PTHR24169:SF25">
    <property type="entry name" value="DORSAL-RELATED IMMUNITY FACTOR DIF-RELATED"/>
    <property type="match status" value="1"/>
</dbReference>
<dbReference type="PANTHER" id="PTHR24169">
    <property type="entry name" value="NUCLEAR FACTOR NF-KAPPA-B PROTEIN"/>
    <property type="match status" value="1"/>
</dbReference>
<dbReference type="Pfam" id="PF16179">
    <property type="entry name" value="RHD_dimer"/>
    <property type="match status" value="1"/>
</dbReference>
<dbReference type="Pfam" id="PF00554">
    <property type="entry name" value="RHD_DNA_bind"/>
    <property type="match status" value="1"/>
</dbReference>
<dbReference type="PRINTS" id="PR00057">
    <property type="entry name" value="NFKBTNSCPFCT"/>
</dbReference>
<dbReference type="SMART" id="SM00429">
    <property type="entry name" value="IPT"/>
    <property type="match status" value="1"/>
</dbReference>
<dbReference type="SUPFAM" id="SSF81296">
    <property type="entry name" value="E set domains"/>
    <property type="match status" value="1"/>
</dbReference>
<dbReference type="SUPFAM" id="SSF49417">
    <property type="entry name" value="p53-like transcription factors"/>
    <property type="match status" value="1"/>
</dbReference>
<dbReference type="PROSITE" id="PS01204">
    <property type="entry name" value="REL_1"/>
    <property type="match status" value="1"/>
</dbReference>
<dbReference type="PROSITE" id="PS50254">
    <property type="entry name" value="REL_2"/>
    <property type="match status" value="1"/>
</dbReference>
<proteinExistence type="evidence at protein level"/>
<organism>
    <name type="scientific">Drosophila melanogaster</name>
    <name type="common">Fruit fly</name>
    <dbReference type="NCBI Taxonomy" id="7227"/>
    <lineage>
        <taxon>Eukaryota</taxon>
        <taxon>Metazoa</taxon>
        <taxon>Ecdysozoa</taxon>
        <taxon>Arthropoda</taxon>
        <taxon>Hexapoda</taxon>
        <taxon>Insecta</taxon>
        <taxon>Pterygota</taxon>
        <taxon>Neoptera</taxon>
        <taxon>Endopterygota</taxon>
        <taxon>Diptera</taxon>
        <taxon>Brachycera</taxon>
        <taxon>Muscomorpha</taxon>
        <taxon>Ephydroidea</taxon>
        <taxon>Drosophilidae</taxon>
        <taxon>Drosophila</taxon>
        <taxon>Sophophora</taxon>
    </lineage>
</organism>
<feature type="chain" id="PRO_0000205164" description="Embryonic polarity protein dorsal">
    <location>
        <begin position="1"/>
        <end position="999"/>
    </location>
</feature>
<feature type="domain" description="RHD" evidence="2">
    <location>
        <begin position="47"/>
        <end position="342"/>
    </location>
</feature>
<feature type="region of interest" description="Disordered" evidence="3">
    <location>
        <begin position="1"/>
        <end position="44"/>
    </location>
</feature>
<feature type="region of interest" description="Disordered" evidence="3">
    <location>
        <begin position="389"/>
        <end position="424"/>
    </location>
</feature>
<feature type="region of interest" description="Disordered" evidence="3">
    <location>
        <begin position="670"/>
        <end position="851"/>
    </location>
</feature>
<feature type="short sequence motif" description="Nuclear export signal" evidence="7">
    <location>
        <begin position="668"/>
        <end position="677"/>
    </location>
</feature>
<feature type="short sequence motif" description="Nuclear localization signal" evidence="1">
    <location>
        <begin position="756"/>
        <end position="773"/>
    </location>
</feature>
<feature type="compositionally biased region" description="Low complexity" evidence="3">
    <location>
        <begin position="402"/>
        <end position="424"/>
    </location>
</feature>
<feature type="compositionally biased region" description="Pro residues" evidence="3">
    <location>
        <begin position="677"/>
        <end position="686"/>
    </location>
</feature>
<feature type="compositionally biased region" description="Basic and acidic residues" evidence="3">
    <location>
        <begin position="710"/>
        <end position="719"/>
    </location>
</feature>
<feature type="compositionally biased region" description="Polar residues" evidence="3">
    <location>
        <begin position="720"/>
        <end position="734"/>
    </location>
</feature>
<feature type="compositionally biased region" description="Low complexity" evidence="3">
    <location>
        <begin position="819"/>
        <end position="829"/>
    </location>
</feature>
<feature type="compositionally biased region" description="Low complexity" evidence="3">
    <location>
        <begin position="836"/>
        <end position="851"/>
    </location>
</feature>
<feature type="modified residue" description="Phosphoserine; by PKA" evidence="1">
    <location>
        <position position="312"/>
    </location>
</feature>
<feature type="splice variant" id="VSP_005581" description="In isoform A." evidence="12 13 14">
    <original>GKHTFWNLHRHLKRKPDEDLFQQILRLDAKREVQPPTIEVIDLDTPKIDVQREIPSEMEFNHEESQQSEPALEQEQSVQQEQYTQEQSLQQEQYTQEQSLQQEQYLQQLEQQQSFQLEEPMQQDQELPAQQSFDQAIDHLPDHTSDHIPEDMEAADAHAEAEAHRLRSEQEKEIDTIIDEKVRELEQLDLGQQLEPRPLTANDKITEWMKSSEIEQQVHEPSPTAEADVLDSALEISKADKTLDELLETVAELDEIYTDFKVQRDTYKNTIQNELAGLQGRAPLQVEDSFDDAATYTSLQIAFKNPVLIPMDDIMPPTPPMSQCAPEDAHQHYDPVEVNSQARKPETP</original>
    <variation>DPAHLRRKRQKTGGDPMHLLLQQQQKQQLQNDHQDGRQTNMNCWNTQNIPPIKTEPRDTSPQPFGLSYRAPPELTPSPQPLSPSSNYNHNSTPSPYNMASAVTPTNGQQQLMSPNHPQQQQQQQQYGATDLGSNYNPFAQQVLAQQQQHQQQQQQHQHQHQQQHQQQQQQQQQQQQQSLQFHANPFGNPGGNSWESKFSAAAVAAAAATATGAAPANGNSNNLSNLNNPFTMHNLLTSGGGPGNANNLQWNLTTNHLHNQHTLHQQQQLQQQQQQQYDNTAPTNNNANLNNNNNNNNTAGNQADNNGPTLSNLLSFDSGQLVHINSEDQQILRLNSEDLQISNLSIST</variation>
    <location>
        <begin position="330"/>
        <end position="677"/>
    </location>
</feature>
<feature type="splice variant" id="VSP_005582" description="In isoform A." evidence="12 13 14">
    <location>
        <begin position="678"/>
        <end position="999"/>
    </location>
</feature>
<feature type="sequence conflict" description="In Ref. 6; AAT94434." evidence="15" ref="6">
    <original>T</original>
    <variation>S</variation>
    <location>
        <position position="236"/>
    </location>
</feature>
<feature type="sequence conflict" description="In Ref. 3; AAC35296." evidence="15" ref="3">
    <original>H</original>
    <variation>Q</variation>
    <location>
        <position position="391"/>
    </location>
</feature>
<feature type="sequence conflict" description="In Ref. 3; AAC35296." evidence="15" ref="3">
    <original>L</original>
    <variation>F</variation>
    <location>
        <position position="401"/>
    </location>
</feature>
<feature type="sequence conflict" description="In Ref. 3; AAC35296." evidence="15" ref="3">
    <original>V</original>
    <variation>SQQEQYTQEQSL</variation>
    <location>
        <position position="407"/>
    </location>
</feature>
<feature type="sequence conflict" description="In Ref. 3; AAC35296." evidence="15" ref="3">
    <original>DK</original>
    <variation>EQ</variation>
    <location>
        <begin position="698"/>
        <end position="699"/>
    </location>
</feature>
<feature type="sequence conflict" description="In Ref. 3; AAC35296." evidence="15" ref="3">
    <original>ASEFDETSAYYAPVDAGEILTPDEVAKRLAAANGI</original>
    <variation>PVNLTRPPPTMLPWMLARF</variation>
    <location>
        <begin position="965"/>
        <end position="999"/>
    </location>
</feature>
<feature type="sequence conflict" description="In Ref. 1; AAA28479." evidence="15" ref="1">
    <original>Q</original>
    <variation>QQ</variation>
    <location sequence="P15330-2">
        <position position="506"/>
    </location>
</feature>